<gene>
    <name type="primary">atpC</name>
    <name type="synonym">uncC</name>
    <name type="ordered locus">Awo_c02240</name>
</gene>
<evidence type="ECO:0000250" key="1"/>
<evidence type="ECO:0000269" key="2">
    <source>
    </source>
</evidence>
<evidence type="ECO:0000305" key="3"/>
<feature type="initiator methionine" description="Removed" evidence="2">
    <location>
        <position position="1"/>
    </location>
</feature>
<feature type="chain" id="PRO_0000188084" description="ATP synthase epsilon chain, sodium ion specific">
    <location>
        <begin position="2"/>
        <end position="133"/>
    </location>
</feature>
<keyword id="KW-0066">ATP synthesis</keyword>
<keyword id="KW-1003">Cell membrane</keyword>
<keyword id="KW-0139">CF(1)</keyword>
<keyword id="KW-0903">Direct protein sequencing</keyword>
<keyword id="KW-0406">Ion transport</keyword>
<keyword id="KW-0472">Membrane</keyword>
<keyword id="KW-1185">Reference proteome</keyword>
<keyword id="KW-0915">Sodium</keyword>
<keyword id="KW-0739">Sodium transport</keyword>
<keyword id="KW-0813">Transport</keyword>
<comment type="function">
    <text>Produces ATP from ADP in the presence of a sodium gradient across the membrane.</text>
</comment>
<comment type="activity regulation">
    <text>Inhibited by nitrate.</text>
</comment>
<comment type="subunit">
    <text>F-type ATPases have 2 components, CF(1) - the catalytic core - and CF(0) - the membrane proton channel. CF(1) has five subunits: alpha(3), beta(3), gamma(1), delta(1), epsilon(1). CF(0) has three main subunits: a, b and c.</text>
</comment>
<comment type="subcellular location">
    <subcellularLocation>
        <location evidence="1">Cell membrane</location>
        <topology evidence="1">Peripheral membrane protein</topology>
    </subcellularLocation>
</comment>
<comment type="similarity">
    <text evidence="3">Belongs to the ATPase epsilon chain family.</text>
</comment>
<sequence length="133" mass="14837">MAETFRLKIIAPTGVFFDDDIERVVIRGIEGELAILAEHTPLTTNVAIGTFNIIFADKKKKNGTLLGGIATINPRETIILTDAAEWPEEIDIKRAQEAKERALKRIHDDKFDTARARAALERAIARINSKENV</sequence>
<protein>
    <recommendedName>
        <fullName>ATP synthase epsilon chain, sodium ion specific</fullName>
    </recommendedName>
    <alternativeName>
        <fullName>F-ATPase epsilon subunit, sodium ion specific</fullName>
    </alternativeName>
    <alternativeName>
        <fullName>Na(+)-translocating ATPase subunit epsilon</fullName>
    </alternativeName>
</protein>
<name>ATPE_ACEWD</name>
<accession>P50009</accession>
<accession>H6LG97</accession>
<organism>
    <name type="scientific">Acetobacterium woodii (strain ATCC 29683 / DSM 1030 / JCM 2381 / KCTC 1655 / WB1)</name>
    <dbReference type="NCBI Taxonomy" id="931626"/>
    <lineage>
        <taxon>Bacteria</taxon>
        <taxon>Bacillati</taxon>
        <taxon>Bacillota</taxon>
        <taxon>Clostridia</taxon>
        <taxon>Eubacteriales</taxon>
        <taxon>Eubacteriaceae</taxon>
        <taxon>Acetobacterium</taxon>
    </lineage>
</organism>
<dbReference type="EMBL" id="U10505">
    <property type="protein sequence ID" value="AAA79909.1"/>
    <property type="molecule type" value="Genomic_DNA"/>
</dbReference>
<dbReference type="EMBL" id="CP002987">
    <property type="protein sequence ID" value="AFA47033.1"/>
    <property type="molecule type" value="Genomic_DNA"/>
</dbReference>
<dbReference type="PIR" id="I39749">
    <property type="entry name" value="I39749"/>
</dbReference>
<dbReference type="RefSeq" id="WP_014354636.1">
    <property type="nucleotide sequence ID" value="NC_016894.1"/>
</dbReference>
<dbReference type="SMR" id="P50009"/>
<dbReference type="STRING" id="931626.Awo_c02240"/>
<dbReference type="TCDB" id="3.A.2.1.5">
    <property type="family name" value="the h+- or na+-translocating f-type, v-type and a-type atpase (f-atpase) superfamily"/>
</dbReference>
<dbReference type="KEGG" id="awo:Awo_c02240"/>
<dbReference type="eggNOG" id="COG0355">
    <property type="taxonomic scope" value="Bacteria"/>
</dbReference>
<dbReference type="HOGENOM" id="CLU_084338_1_3_9"/>
<dbReference type="OrthoDB" id="9804110at2"/>
<dbReference type="Proteomes" id="UP000007177">
    <property type="component" value="Chromosome"/>
</dbReference>
<dbReference type="GO" id="GO:0005886">
    <property type="term" value="C:plasma membrane"/>
    <property type="evidence" value="ECO:0007669"/>
    <property type="project" value="UniProtKB-SubCell"/>
</dbReference>
<dbReference type="GO" id="GO:0045259">
    <property type="term" value="C:proton-transporting ATP synthase complex"/>
    <property type="evidence" value="ECO:0007669"/>
    <property type="project" value="UniProtKB-KW"/>
</dbReference>
<dbReference type="GO" id="GO:0005524">
    <property type="term" value="F:ATP binding"/>
    <property type="evidence" value="ECO:0007669"/>
    <property type="project" value="UniProtKB-UniRule"/>
</dbReference>
<dbReference type="GO" id="GO:0046933">
    <property type="term" value="F:proton-transporting ATP synthase activity, rotational mechanism"/>
    <property type="evidence" value="ECO:0007669"/>
    <property type="project" value="UniProtKB-UniRule"/>
</dbReference>
<dbReference type="GO" id="GO:0006814">
    <property type="term" value="P:sodium ion transport"/>
    <property type="evidence" value="ECO:0007669"/>
    <property type="project" value="UniProtKB-KW"/>
</dbReference>
<dbReference type="CDD" id="cd12152">
    <property type="entry name" value="F1-ATPase_delta"/>
    <property type="match status" value="1"/>
</dbReference>
<dbReference type="Gene3D" id="1.20.5.440">
    <property type="entry name" value="ATP synthase delta/epsilon subunit, C-terminal domain"/>
    <property type="match status" value="1"/>
</dbReference>
<dbReference type="Gene3D" id="2.60.15.10">
    <property type="entry name" value="F0F1 ATP synthase delta/epsilon subunit, N-terminal"/>
    <property type="match status" value="1"/>
</dbReference>
<dbReference type="HAMAP" id="MF_00530">
    <property type="entry name" value="ATP_synth_epsil_bac"/>
    <property type="match status" value="1"/>
</dbReference>
<dbReference type="InterPro" id="IPR036794">
    <property type="entry name" value="ATP_F1_dsu/esu_C_sf"/>
</dbReference>
<dbReference type="InterPro" id="IPR001469">
    <property type="entry name" value="ATP_synth_F1_dsu/esu"/>
</dbReference>
<dbReference type="InterPro" id="IPR020546">
    <property type="entry name" value="ATP_synth_F1_dsu/esu_N"/>
</dbReference>
<dbReference type="InterPro" id="IPR020547">
    <property type="entry name" value="ATP_synth_F1_esu_C"/>
</dbReference>
<dbReference type="InterPro" id="IPR036771">
    <property type="entry name" value="ATPsynth_dsu/esu_N"/>
</dbReference>
<dbReference type="NCBIfam" id="TIGR01216">
    <property type="entry name" value="ATP_synt_epsi"/>
    <property type="match status" value="1"/>
</dbReference>
<dbReference type="PANTHER" id="PTHR13822">
    <property type="entry name" value="ATP SYNTHASE DELTA/EPSILON CHAIN"/>
    <property type="match status" value="1"/>
</dbReference>
<dbReference type="PANTHER" id="PTHR13822:SF10">
    <property type="entry name" value="ATP SYNTHASE EPSILON CHAIN, CHLOROPLASTIC"/>
    <property type="match status" value="1"/>
</dbReference>
<dbReference type="Pfam" id="PF00401">
    <property type="entry name" value="ATP-synt_DE"/>
    <property type="match status" value="1"/>
</dbReference>
<dbReference type="Pfam" id="PF02823">
    <property type="entry name" value="ATP-synt_DE_N"/>
    <property type="match status" value="1"/>
</dbReference>
<dbReference type="SUPFAM" id="SSF46604">
    <property type="entry name" value="Epsilon subunit of F1F0-ATP synthase C-terminal domain"/>
    <property type="match status" value="1"/>
</dbReference>
<dbReference type="SUPFAM" id="SSF51344">
    <property type="entry name" value="Epsilon subunit of F1F0-ATP synthase N-terminal domain"/>
    <property type="match status" value="1"/>
</dbReference>
<reference key="1">
    <citation type="journal article" date="1995" name="Biochim. Biophys. Acta">
        <title>The Na(+)-translocating ATPase of Acetobacterium woodii is a F1F0-type enzyme as deduced from the primary structure of its beta, gamma and epsilon subunits.</title>
        <authorList>
            <person name="Forster A."/>
            <person name="Daniel R."/>
            <person name="Mueller V."/>
        </authorList>
    </citation>
    <scope>NUCLEOTIDE SEQUENCE [GENOMIC DNA]</scope>
    <source>
        <strain>ATCC 29683 / DSM 1030 / JCM 2381 / KCTC 1655 / WB1</strain>
    </source>
</reference>
<reference key="2">
    <citation type="submission" date="2011-07" db="EMBL/GenBank/DDBJ databases">
        <title>Complete genome sequence of Acetobacterium woodii.</title>
        <authorList>
            <person name="Poehlein A."/>
            <person name="Schmidt S."/>
            <person name="Kaster A.-K."/>
            <person name="Goenrich M."/>
            <person name="Vollmers J."/>
            <person name="Thuermer A."/>
            <person name="Gottschalk G."/>
            <person name="Thauer R.K."/>
            <person name="Daniel R."/>
            <person name="Mueller V."/>
        </authorList>
    </citation>
    <scope>NUCLEOTIDE SEQUENCE [LARGE SCALE GENOMIC DNA]</scope>
    <source>
        <strain>ATCC 29683 / DSM 1030 / JCM 2381 / KCTC 1655 / WB1</strain>
    </source>
</reference>
<reference key="3">
    <citation type="journal article" date="1994" name="Eur. J. Biochem.">
        <title>Purification of ATP synthase from Acetobacterium woodii and identification as a Na(+)-translocating F1F0-type enzyme.</title>
        <authorList>
            <person name="Reidlinger J."/>
            <person name="Mueller V."/>
        </authorList>
    </citation>
    <scope>PROTEIN SEQUENCE OF 2-9</scope>
    <source>
        <strain>ATCC 29683 / DSM 1030 / JCM 2381 / KCTC 1655 / WB1</strain>
    </source>
</reference>
<proteinExistence type="evidence at protein level"/>